<accession>P0CAZ2</accession>
<evidence type="ECO:0000250" key="1"/>
<evidence type="ECO:0000255" key="2"/>
<evidence type="ECO:0000305" key="3"/>
<sequence length="129" mass="14622">MKYFVVALALVAAFACIAESKPAESEHELAEVEEENELADLEDAVWLEHLADLSDLEEARGFFGNTWKKIKGKADKIMLKKAVKIMVKKEGIFKEEAQAKVDAMSKKQIRLYLLKYYGKKALQKASEKL</sequence>
<keyword id="KW-0044">Antibiotic</keyword>
<keyword id="KW-0929">Antimicrobial</keyword>
<keyword id="KW-0204">Cytolysis</keyword>
<keyword id="KW-0354">Hemolysis</keyword>
<keyword id="KW-0964">Secreted</keyword>
<keyword id="KW-0732">Signal</keyword>
<keyword id="KW-0800">Toxin</keyword>
<gene>
    <name type="primary">cit 1-6</name>
</gene>
<protein>
    <recommendedName>
        <fullName>M-zodatoxin-Lt8i</fullName>
        <shortName>M-ZDTX-Lt8i</shortName>
    </recommendedName>
    <alternativeName>
        <fullName>Cytoinsectotoxin 1-6</fullName>
    </alternativeName>
</protein>
<feature type="signal peptide" evidence="2">
    <location>
        <begin position="1"/>
        <end position="20"/>
    </location>
</feature>
<feature type="propeptide" id="PRO_0000380137" evidence="1">
    <location>
        <begin position="21"/>
        <end position="60"/>
    </location>
</feature>
<feature type="chain" id="PRO_0000380138" description="M-zodatoxin-Lt8i">
    <location>
        <begin position="61"/>
        <end position="129"/>
    </location>
</feature>
<name>CTX16_LACTA</name>
<dbReference type="ArachnoServer" id="AS000763">
    <property type="toxin name" value="M-zodatoxin-Lt8i"/>
</dbReference>
<dbReference type="GO" id="GO:0005576">
    <property type="term" value="C:extracellular region"/>
    <property type="evidence" value="ECO:0007669"/>
    <property type="project" value="UniProtKB-SubCell"/>
</dbReference>
<dbReference type="GO" id="GO:0090729">
    <property type="term" value="F:toxin activity"/>
    <property type="evidence" value="ECO:0007669"/>
    <property type="project" value="UniProtKB-KW"/>
</dbReference>
<dbReference type="GO" id="GO:0042742">
    <property type="term" value="P:defense response to bacterium"/>
    <property type="evidence" value="ECO:0007669"/>
    <property type="project" value="UniProtKB-KW"/>
</dbReference>
<dbReference type="GO" id="GO:0031640">
    <property type="term" value="P:killing of cells of another organism"/>
    <property type="evidence" value="ECO:0007669"/>
    <property type="project" value="UniProtKB-KW"/>
</dbReference>
<dbReference type="InterPro" id="IPR018802">
    <property type="entry name" value="Latarcin_precursor"/>
</dbReference>
<dbReference type="Pfam" id="PF10279">
    <property type="entry name" value="Latarcin"/>
    <property type="match status" value="1"/>
</dbReference>
<reference key="1">
    <citation type="journal article" date="2008" name="Biochem. J.">
        <title>Cyto-insectotoxins, a novel class of cytolytic and insecticidal peptides from spider venom.</title>
        <authorList>
            <person name="Vassilevski A.A."/>
            <person name="Kozlov S.A."/>
            <person name="Samsonova O.V."/>
            <person name="Egorova N.S."/>
            <person name="Karpunin D.V."/>
            <person name="Pluzhnikov K.A."/>
            <person name="Feofanov A.V."/>
            <person name="Grishin E.V."/>
        </authorList>
    </citation>
    <scope>NUCLEOTIDE SEQUENCE [MRNA]</scope>
    <source>
        <tissue>Venom gland</tissue>
    </source>
</reference>
<comment type="function">
    <text evidence="1">Insecticidal, cytolytic and antimicrobial peptide. Forms voltage-dependent, ion-permeable channels in membranes. At high concentration causes cell membrane lysis (By similarity).</text>
</comment>
<comment type="subcellular location">
    <subcellularLocation>
        <location evidence="1">Secreted</location>
    </subcellularLocation>
</comment>
<comment type="tissue specificity">
    <text>Expressed by the venom gland.</text>
</comment>
<comment type="similarity">
    <text evidence="3">Belongs to the cationic peptide 06 (cytoinsectotoxin) family.</text>
</comment>
<proteinExistence type="evidence at transcript level"/>
<organism>
    <name type="scientific">Lachesana tarabaevi</name>
    <name type="common">Spider</name>
    <dbReference type="NCBI Taxonomy" id="379576"/>
    <lineage>
        <taxon>Eukaryota</taxon>
        <taxon>Metazoa</taxon>
        <taxon>Ecdysozoa</taxon>
        <taxon>Arthropoda</taxon>
        <taxon>Chelicerata</taxon>
        <taxon>Arachnida</taxon>
        <taxon>Araneae</taxon>
        <taxon>Araneomorphae</taxon>
        <taxon>Entelegynae</taxon>
        <taxon>Entelegynae incertae sedis</taxon>
        <taxon>Zodariidae</taxon>
        <taxon>Lachesana</taxon>
    </lineage>
</organism>